<proteinExistence type="inferred from homology"/>
<gene>
    <name evidence="1" type="primary">aat</name>
    <name type="ordered locus">HCH_02343</name>
</gene>
<protein>
    <recommendedName>
        <fullName evidence="1">Leucyl/phenylalanyl-tRNA--protein transferase</fullName>
        <ecNumber evidence="1">2.3.2.6</ecNumber>
    </recommendedName>
    <alternativeName>
        <fullName evidence="1">L/F-transferase</fullName>
    </alternativeName>
    <alternativeName>
        <fullName evidence="1">Leucyltransferase</fullName>
    </alternativeName>
    <alternativeName>
        <fullName evidence="1">Phenyalanyltransferase</fullName>
    </alternativeName>
</protein>
<organism>
    <name type="scientific">Hahella chejuensis (strain KCTC 2396)</name>
    <dbReference type="NCBI Taxonomy" id="349521"/>
    <lineage>
        <taxon>Bacteria</taxon>
        <taxon>Pseudomonadati</taxon>
        <taxon>Pseudomonadota</taxon>
        <taxon>Gammaproteobacteria</taxon>
        <taxon>Oceanospirillales</taxon>
        <taxon>Hahellaceae</taxon>
        <taxon>Hahella</taxon>
    </lineage>
</organism>
<reference key="1">
    <citation type="journal article" date="2005" name="Nucleic Acids Res.">
        <title>Genomic blueprint of Hahella chejuensis, a marine microbe producing an algicidal agent.</title>
        <authorList>
            <person name="Jeong H."/>
            <person name="Yim J.H."/>
            <person name="Lee C."/>
            <person name="Choi S.-H."/>
            <person name="Park Y.K."/>
            <person name="Yoon S.H."/>
            <person name="Hur C.-G."/>
            <person name="Kang H.-Y."/>
            <person name="Kim D."/>
            <person name="Lee H.H."/>
            <person name="Park K.H."/>
            <person name="Park S.-H."/>
            <person name="Park H.-S."/>
            <person name="Lee H.K."/>
            <person name="Oh T.K."/>
            <person name="Kim J.F."/>
        </authorList>
    </citation>
    <scope>NUCLEOTIDE SEQUENCE [LARGE SCALE GENOMIC DNA]</scope>
    <source>
        <strain>KCTC 2396</strain>
    </source>
</reference>
<comment type="function">
    <text evidence="1">Functions in the N-end rule pathway of protein degradation where it conjugates Leu, Phe and, less efficiently, Met from aminoacyl-tRNAs to the N-termini of proteins containing an N-terminal arginine or lysine.</text>
</comment>
<comment type="catalytic activity">
    <reaction evidence="1">
        <text>N-terminal L-lysyl-[protein] + L-leucyl-tRNA(Leu) = N-terminal L-leucyl-L-lysyl-[protein] + tRNA(Leu) + H(+)</text>
        <dbReference type="Rhea" id="RHEA:12340"/>
        <dbReference type="Rhea" id="RHEA-COMP:9613"/>
        <dbReference type="Rhea" id="RHEA-COMP:9622"/>
        <dbReference type="Rhea" id="RHEA-COMP:12670"/>
        <dbReference type="Rhea" id="RHEA-COMP:12671"/>
        <dbReference type="ChEBI" id="CHEBI:15378"/>
        <dbReference type="ChEBI" id="CHEBI:65249"/>
        <dbReference type="ChEBI" id="CHEBI:78442"/>
        <dbReference type="ChEBI" id="CHEBI:78494"/>
        <dbReference type="ChEBI" id="CHEBI:133043"/>
        <dbReference type="EC" id="2.3.2.6"/>
    </reaction>
</comment>
<comment type="catalytic activity">
    <reaction evidence="1">
        <text>N-terminal L-arginyl-[protein] + L-leucyl-tRNA(Leu) = N-terminal L-leucyl-L-arginyl-[protein] + tRNA(Leu) + H(+)</text>
        <dbReference type="Rhea" id="RHEA:50416"/>
        <dbReference type="Rhea" id="RHEA-COMP:9613"/>
        <dbReference type="Rhea" id="RHEA-COMP:9622"/>
        <dbReference type="Rhea" id="RHEA-COMP:12672"/>
        <dbReference type="Rhea" id="RHEA-COMP:12673"/>
        <dbReference type="ChEBI" id="CHEBI:15378"/>
        <dbReference type="ChEBI" id="CHEBI:64719"/>
        <dbReference type="ChEBI" id="CHEBI:78442"/>
        <dbReference type="ChEBI" id="CHEBI:78494"/>
        <dbReference type="ChEBI" id="CHEBI:133044"/>
        <dbReference type="EC" id="2.3.2.6"/>
    </reaction>
</comment>
<comment type="catalytic activity">
    <reaction evidence="1">
        <text>L-phenylalanyl-tRNA(Phe) + an N-terminal L-alpha-aminoacyl-[protein] = an N-terminal L-phenylalanyl-L-alpha-aminoacyl-[protein] + tRNA(Phe)</text>
        <dbReference type="Rhea" id="RHEA:43632"/>
        <dbReference type="Rhea" id="RHEA-COMP:9668"/>
        <dbReference type="Rhea" id="RHEA-COMP:9699"/>
        <dbReference type="Rhea" id="RHEA-COMP:10636"/>
        <dbReference type="Rhea" id="RHEA-COMP:10637"/>
        <dbReference type="ChEBI" id="CHEBI:78442"/>
        <dbReference type="ChEBI" id="CHEBI:78531"/>
        <dbReference type="ChEBI" id="CHEBI:78597"/>
        <dbReference type="ChEBI" id="CHEBI:83561"/>
        <dbReference type="EC" id="2.3.2.6"/>
    </reaction>
</comment>
<comment type="subcellular location">
    <subcellularLocation>
        <location evidence="1">Cytoplasm</location>
    </subcellularLocation>
</comment>
<comment type="similarity">
    <text evidence="1">Belongs to the L/F-transferase family.</text>
</comment>
<evidence type="ECO:0000255" key="1">
    <source>
        <dbReference type="HAMAP-Rule" id="MF_00688"/>
    </source>
</evidence>
<feature type="chain" id="PRO_0000258061" description="Leucyl/phenylalanyl-tRNA--protein transferase">
    <location>
        <begin position="1"/>
        <end position="234"/>
    </location>
</feature>
<name>LFTR_HAHCH</name>
<keyword id="KW-0012">Acyltransferase</keyword>
<keyword id="KW-0963">Cytoplasm</keyword>
<keyword id="KW-1185">Reference proteome</keyword>
<keyword id="KW-0808">Transferase</keyword>
<accession>Q2SJK8</accession>
<sequence>MPALPWLDENLWFPHPDSALKDPNGLLCVGGDLHPARLRLAYENGIFPWFSEDQPILWWSPDPRCIIRHEDLHISRSMRRFLRNSGLTYSFDQHFTLVVQACAAPRSYSNETWITRDMLQAYSDLHQIGVAHSIEVWRESELVGGLYGLAIGRCFFGESMFSKETNASKAAFITLVRQLHAWGYRLIDCQVPNPHLLSLGACQISRKEFLSILEIEVRADFSHPWKMTIDPTGY</sequence>
<dbReference type="EC" id="2.3.2.6" evidence="1"/>
<dbReference type="EMBL" id="CP000155">
    <property type="protein sequence ID" value="ABC29166.1"/>
    <property type="molecule type" value="Genomic_DNA"/>
</dbReference>
<dbReference type="RefSeq" id="WP_011396235.1">
    <property type="nucleotide sequence ID" value="NC_007645.1"/>
</dbReference>
<dbReference type="SMR" id="Q2SJK8"/>
<dbReference type="STRING" id="349521.HCH_02343"/>
<dbReference type="KEGG" id="hch:HCH_02343"/>
<dbReference type="eggNOG" id="COG2360">
    <property type="taxonomic scope" value="Bacteria"/>
</dbReference>
<dbReference type="HOGENOM" id="CLU_075045_0_0_6"/>
<dbReference type="OrthoDB" id="9790282at2"/>
<dbReference type="Proteomes" id="UP000000238">
    <property type="component" value="Chromosome"/>
</dbReference>
<dbReference type="GO" id="GO:0005737">
    <property type="term" value="C:cytoplasm"/>
    <property type="evidence" value="ECO:0007669"/>
    <property type="project" value="UniProtKB-SubCell"/>
</dbReference>
<dbReference type="GO" id="GO:0008914">
    <property type="term" value="F:leucyl-tRNA--protein transferase activity"/>
    <property type="evidence" value="ECO:0007669"/>
    <property type="project" value="UniProtKB-UniRule"/>
</dbReference>
<dbReference type="GO" id="GO:0030163">
    <property type="term" value="P:protein catabolic process"/>
    <property type="evidence" value="ECO:0007669"/>
    <property type="project" value="UniProtKB-UniRule"/>
</dbReference>
<dbReference type="FunFam" id="3.30.70.3550:FF:000001">
    <property type="entry name" value="Leucyl/phenylalanyl-tRNA--protein transferase"/>
    <property type="match status" value="1"/>
</dbReference>
<dbReference type="FunFam" id="3.40.630.70:FF:000001">
    <property type="entry name" value="Leucyl/phenylalanyl-tRNA--protein transferase"/>
    <property type="match status" value="1"/>
</dbReference>
<dbReference type="Gene3D" id="3.40.630.70">
    <property type="entry name" value="Leucyl/phenylalanyl-tRNA-protein transferase, C-terminal domain"/>
    <property type="match status" value="1"/>
</dbReference>
<dbReference type="Gene3D" id="3.30.70.3550">
    <property type="entry name" value="Leucyl/phenylalanyl-tRNA-protein transferase, N-terminal domain"/>
    <property type="match status" value="1"/>
</dbReference>
<dbReference type="HAMAP" id="MF_00688">
    <property type="entry name" value="Leu_Phe_trans"/>
    <property type="match status" value="1"/>
</dbReference>
<dbReference type="InterPro" id="IPR016181">
    <property type="entry name" value="Acyl_CoA_acyltransferase"/>
</dbReference>
<dbReference type="InterPro" id="IPR004616">
    <property type="entry name" value="Leu/Phe-tRNA_Trfase"/>
</dbReference>
<dbReference type="InterPro" id="IPR042203">
    <property type="entry name" value="Leu/Phe-tRNA_Trfase_C"/>
</dbReference>
<dbReference type="InterPro" id="IPR042221">
    <property type="entry name" value="Leu/Phe-tRNA_Trfase_N"/>
</dbReference>
<dbReference type="NCBIfam" id="TIGR00667">
    <property type="entry name" value="aat"/>
    <property type="match status" value="1"/>
</dbReference>
<dbReference type="PANTHER" id="PTHR30098">
    <property type="entry name" value="LEUCYL/PHENYLALANYL-TRNA--PROTEIN TRANSFERASE"/>
    <property type="match status" value="1"/>
</dbReference>
<dbReference type="PANTHER" id="PTHR30098:SF2">
    <property type="entry name" value="LEUCYL_PHENYLALANYL-TRNA--PROTEIN TRANSFERASE"/>
    <property type="match status" value="1"/>
</dbReference>
<dbReference type="Pfam" id="PF03588">
    <property type="entry name" value="Leu_Phe_trans"/>
    <property type="match status" value="1"/>
</dbReference>
<dbReference type="SUPFAM" id="SSF55729">
    <property type="entry name" value="Acyl-CoA N-acyltransferases (Nat)"/>
    <property type="match status" value="1"/>
</dbReference>